<comment type="function">
    <text evidence="1">Hydrolyzes ribosome-free peptidyl-tRNAs (with 1 or more amino acids incorporated), which drop off the ribosome during protein synthesis, or as a result of ribosome stalling.</text>
</comment>
<comment type="function">
    <text evidence="1">Catalyzes the release of premature peptidyl moieties from peptidyl-tRNA molecules trapped in stalled 50S ribosomal subunits, and thus maintains levels of free tRNAs and 50S ribosomes.</text>
</comment>
<comment type="catalytic activity">
    <reaction evidence="1">
        <text>an N-acyl-L-alpha-aminoacyl-tRNA + H2O = an N-acyl-L-amino acid + a tRNA + H(+)</text>
        <dbReference type="Rhea" id="RHEA:54448"/>
        <dbReference type="Rhea" id="RHEA-COMP:10123"/>
        <dbReference type="Rhea" id="RHEA-COMP:13883"/>
        <dbReference type="ChEBI" id="CHEBI:15377"/>
        <dbReference type="ChEBI" id="CHEBI:15378"/>
        <dbReference type="ChEBI" id="CHEBI:59874"/>
        <dbReference type="ChEBI" id="CHEBI:78442"/>
        <dbReference type="ChEBI" id="CHEBI:138191"/>
        <dbReference type="EC" id="3.1.1.29"/>
    </reaction>
</comment>
<comment type="subunit">
    <text evidence="1">Monomer.</text>
</comment>
<comment type="subcellular location">
    <subcellularLocation>
        <location evidence="1">Cytoplasm</location>
    </subcellularLocation>
</comment>
<comment type="similarity">
    <text evidence="1">Belongs to the PTH family.</text>
</comment>
<name>PTH_BRUMB</name>
<protein>
    <recommendedName>
        <fullName evidence="1">Peptidyl-tRNA hydrolase</fullName>
        <shortName evidence="1">Pth</shortName>
        <ecNumber evidence="1">3.1.1.29</ecNumber>
    </recommendedName>
</protein>
<reference key="1">
    <citation type="submission" date="2009-03" db="EMBL/GenBank/DDBJ databases">
        <title>Brucella melitensis ATCC 23457 whole genome shotgun sequencing project.</title>
        <authorList>
            <person name="Setubal J.C."/>
            <person name="Boyle S."/>
            <person name="Crasta O.R."/>
            <person name="Gillespie J.J."/>
            <person name="Kenyon R.W."/>
            <person name="Lu J."/>
            <person name="Mane S."/>
            <person name="Nagrani S."/>
            <person name="Shallom J.M."/>
            <person name="Shallom S."/>
            <person name="Shukla M."/>
            <person name="Snyder E.E."/>
            <person name="Sobral B.W."/>
            <person name="Wattam A.R."/>
            <person name="Will R."/>
            <person name="Williams K."/>
            <person name="Yoo H."/>
            <person name="Munk C."/>
            <person name="Tapia R."/>
            <person name="Han C."/>
            <person name="Detter J.C."/>
            <person name="Bruce D."/>
            <person name="Brettin T.S."/>
        </authorList>
    </citation>
    <scope>NUCLEOTIDE SEQUENCE [LARGE SCALE GENOMIC DNA]</scope>
    <source>
        <strain>ATCC 23457</strain>
    </source>
</reference>
<proteinExistence type="inferred from homology"/>
<sequence>MLLIAGLGNPGPQYAHNRHNIGFMAADEIFRRHRFSNWQKKFQAEIADGVIDGEKVLLVKPQTFMNLSGQSIGEAMRFYKLTPADLVVIYDELDLVPGKLRIKTGGGSGGHNGIKSIDAHMQSFPGGQNYRRMRLGIGHPGAKELVHNYVLGDFAKADNEWLDTLMGAVADNVAMLARREDNSFMNRIALAMGDGNQRPGGVKTDPAQLEKAPPKAQSHIRQARQNQKKPNIPESGPMAEMLKKLLGKKD</sequence>
<evidence type="ECO:0000255" key="1">
    <source>
        <dbReference type="HAMAP-Rule" id="MF_00083"/>
    </source>
</evidence>
<evidence type="ECO:0000256" key="2">
    <source>
        <dbReference type="SAM" id="MobiDB-lite"/>
    </source>
</evidence>
<gene>
    <name evidence="1" type="primary">pth</name>
    <name type="ordered locus">BMEA_A1591</name>
</gene>
<accession>C0REH2</accession>
<organism>
    <name type="scientific">Brucella melitensis biotype 2 (strain ATCC 23457)</name>
    <dbReference type="NCBI Taxonomy" id="546272"/>
    <lineage>
        <taxon>Bacteria</taxon>
        <taxon>Pseudomonadati</taxon>
        <taxon>Pseudomonadota</taxon>
        <taxon>Alphaproteobacteria</taxon>
        <taxon>Hyphomicrobiales</taxon>
        <taxon>Brucellaceae</taxon>
        <taxon>Brucella/Ochrobactrum group</taxon>
        <taxon>Brucella</taxon>
    </lineage>
</organism>
<keyword id="KW-0963">Cytoplasm</keyword>
<keyword id="KW-0378">Hydrolase</keyword>
<keyword id="KW-0694">RNA-binding</keyword>
<keyword id="KW-0820">tRNA-binding</keyword>
<feature type="chain" id="PRO_1000118378" description="Peptidyl-tRNA hydrolase">
    <location>
        <begin position="1"/>
        <end position="250"/>
    </location>
</feature>
<feature type="region of interest" description="Disordered" evidence="2">
    <location>
        <begin position="192"/>
        <end position="250"/>
    </location>
</feature>
<feature type="compositionally biased region" description="Polar residues" evidence="2">
    <location>
        <begin position="219"/>
        <end position="229"/>
    </location>
</feature>
<feature type="compositionally biased region" description="Basic and acidic residues" evidence="2">
    <location>
        <begin position="241"/>
        <end position="250"/>
    </location>
</feature>
<feature type="active site" description="Proton acceptor" evidence="1">
    <location>
        <position position="19"/>
    </location>
</feature>
<feature type="binding site" evidence="1">
    <location>
        <position position="14"/>
    </location>
    <ligand>
        <name>tRNA</name>
        <dbReference type="ChEBI" id="CHEBI:17843"/>
    </ligand>
</feature>
<feature type="binding site" evidence="1">
    <location>
        <position position="64"/>
    </location>
    <ligand>
        <name>tRNA</name>
        <dbReference type="ChEBI" id="CHEBI:17843"/>
    </ligand>
</feature>
<feature type="binding site" evidence="1">
    <location>
        <position position="66"/>
    </location>
    <ligand>
        <name>tRNA</name>
        <dbReference type="ChEBI" id="CHEBI:17843"/>
    </ligand>
</feature>
<feature type="binding site" evidence="1">
    <location>
        <position position="112"/>
    </location>
    <ligand>
        <name>tRNA</name>
        <dbReference type="ChEBI" id="CHEBI:17843"/>
    </ligand>
</feature>
<feature type="site" description="Discriminates between blocked and unblocked aminoacyl-tRNA" evidence="1">
    <location>
        <position position="9"/>
    </location>
</feature>
<feature type="site" description="Stabilizes the basic form of H active site to accept a proton" evidence="1">
    <location>
        <position position="91"/>
    </location>
</feature>
<dbReference type="EC" id="3.1.1.29" evidence="1"/>
<dbReference type="EMBL" id="CP001488">
    <property type="protein sequence ID" value="ACO01294.1"/>
    <property type="molecule type" value="Genomic_DNA"/>
</dbReference>
<dbReference type="RefSeq" id="WP_002967832.1">
    <property type="nucleotide sequence ID" value="NC_012441.1"/>
</dbReference>
<dbReference type="SMR" id="C0REH2"/>
<dbReference type="GeneID" id="97533278"/>
<dbReference type="KEGG" id="bmi:BMEA_A1591"/>
<dbReference type="HOGENOM" id="CLU_062456_1_1_5"/>
<dbReference type="PRO" id="PR:C0REH2"/>
<dbReference type="Proteomes" id="UP000001748">
    <property type="component" value="Chromosome I"/>
</dbReference>
<dbReference type="GO" id="GO:0005737">
    <property type="term" value="C:cytoplasm"/>
    <property type="evidence" value="ECO:0007669"/>
    <property type="project" value="UniProtKB-SubCell"/>
</dbReference>
<dbReference type="GO" id="GO:0004045">
    <property type="term" value="F:peptidyl-tRNA hydrolase activity"/>
    <property type="evidence" value="ECO:0007669"/>
    <property type="project" value="UniProtKB-UniRule"/>
</dbReference>
<dbReference type="GO" id="GO:0000049">
    <property type="term" value="F:tRNA binding"/>
    <property type="evidence" value="ECO:0007669"/>
    <property type="project" value="UniProtKB-UniRule"/>
</dbReference>
<dbReference type="GO" id="GO:0006515">
    <property type="term" value="P:protein quality control for misfolded or incompletely synthesized proteins"/>
    <property type="evidence" value="ECO:0007669"/>
    <property type="project" value="UniProtKB-UniRule"/>
</dbReference>
<dbReference type="GO" id="GO:0072344">
    <property type="term" value="P:rescue of stalled ribosome"/>
    <property type="evidence" value="ECO:0007669"/>
    <property type="project" value="UniProtKB-UniRule"/>
</dbReference>
<dbReference type="CDD" id="cd00462">
    <property type="entry name" value="PTH"/>
    <property type="match status" value="1"/>
</dbReference>
<dbReference type="FunFam" id="3.40.50.1470:FF:000001">
    <property type="entry name" value="Peptidyl-tRNA hydrolase"/>
    <property type="match status" value="1"/>
</dbReference>
<dbReference type="Gene3D" id="3.40.50.1470">
    <property type="entry name" value="Peptidyl-tRNA hydrolase"/>
    <property type="match status" value="1"/>
</dbReference>
<dbReference type="HAMAP" id="MF_00083">
    <property type="entry name" value="Pept_tRNA_hydro_bact"/>
    <property type="match status" value="1"/>
</dbReference>
<dbReference type="InterPro" id="IPR001328">
    <property type="entry name" value="Pept_tRNA_hydro"/>
</dbReference>
<dbReference type="InterPro" id="IPR018171">
    <property type="entry name" value="Pept_tRNA_hydro_CS"/>
</dbReference>
<dbReference type="InterPro" id="IPR036416">
    <property type="entry name" value="Pept_tRNA_hydro_sf"/>
</dbReference>
<dbReference type="NCBIfam" id="TIGR00447">
    <property type="entry name" value="pth"/>
    <property type="match status" value="1"/>
</dbReference>
<dbReference type="PANTHER" id="PTHR17224">
    <property type="entry name" value="PEPTIDYL-TRNA HYDROLASE"/>
    <property type="match status" value="1"/>
</dbReference>
<dbReference type="PANTHER" id="PTHR17224:SF1">
    <property type="entry name" value="PEPTIDYL-TRNA HYDROLASE"/>
    <property type="match status" value="1"/>
</dbReference>
<dbReference type="Pfam" id="PF01195">
    <property type="entry name" value="Pept_tRNA_hydro"/>
    <property type="match status" value="1"/>
</dbReference>
<dbReference type="SUPFAM" id="SSF53178">
    <property type="entry name" value="Peptidyl-tRNA hydrolase-like"/>
    <property type="match status" value="1"/>
</dbReference>
<dbReference type="PROSITE" id="PS01195">
    <property type="entry name" value="PEPT_TRNA_HYDROL_1"/>
    <property type="match status" value="1"/>
</dbReference>
<dbReference type="PROSITE" id="PS01196">
    <property type="entry name" value="PEPT_TRNA_HYDROL_2"/>
    <property type="match status" value="1"/>
</dbReference>